<comment type="function">
    <text evidence="1">Catalyzes the synthesis of 5,6-dihydrouridine (D), a modified base found in the D-loop of most tRNAs, via the reduction of the C5-C6 double bond in target uridines.</text>
</comment>
<comment type="catalytic activity">
    <reaction evidence="1">
        <text>a 5,6-dihydrouridine in tRNA + NAD(+) = a uridine in tRNA + NADH + H(+)</text>
        <dbReference type="Rhea" id="RHEA:54452"/>
        <dbReference type="Rhea" id="RHEA-COMP:13339"/>
        <dbReference type="Rhea" id="RHEA-COMP:13887"/>
        <dbReference type="ChEBI" id="CHEBI:15378"/>
        <dbReference type="ChEBI" id="CHEBI:57540"/>
        <dbReference type="ChEBI" id="CHEBI:57945"/>
        <dbReference type="ChEBI" id="CHEBI:65315"/>
        <dbReference type="ChEBI" id="CHEBI:74443"/>
    </reaction>
</comment>
<comment type="catalytic activity">
    <reaction evidence="1">
        <text>a 5,6-dihydrouridine in tRNA + NADP(+) = a uridine in tRNA + NADPH + H(+)</text>
        <dbReference type="Rhea" id="RHEA:23624"/>
        <dbReference type="Rhea" id="RHEA-COMP:13339"/>
        <dbReference type="Rhea" id="RHEA-COMP:13887"/>
        <dbReference type="ChEBI" id="CHEBI:15378"/>
        <dbReference type="ChEBI" id="CHEBI:57783"/>
        <dbReference type="ChEBI" id="CHEBI:58349"/>
        <dbReference type="ChEBI" id="CHEBI:65315"/>
        <dbReference type="ChEBI" id="CHEBI:74443"/>
    </reaction>
</comment>
<comment type="cofactor">
    <cofactor evidence="1">
        <name>FMN</name>
        <dbReference type="ChEBI" id="CHEBI:58210"/>
    </cofactor>
</comment>
<comment type="similarity">
    <text evidence="3">Belongs to the Dus family.</text>
</comment>
<accession>Q55724</accession>
<sequence length="355" mass="39255">MGKCSYRFISLQTLTPNSLLDHSPNPTIWAKPLQIGSLTLHSRVLQSPLSGVTDLVFRRLVRRYAPQAMLYTEMVSATEIHHLRTLPQVMEIDPRENPISIQLFDCRPDFMAEAAQKAVAQGAQSVDINMGCPVNKITKKGGGSSLLRQPAVAEAIVKTVVAAVDVPVTVKTRLGWDDGEINIVEFAQRLQDAGAQMLTLHGRTRAQGYNGRARWQWIAKVKQALTIPVIANGDIFSVEAAIACLEETGADGVMCSRGSLGYPFLVGEIEHFFKTGEKRKAPTVAEKLTCAQEHLQMLWEYKGQRGLFQARKHLAWYCKDFPGAAALREQLFQINSVQEGKDLLDQAISTAKLCL</sequence>
<organism>
    <name type="scientific">Synechocystis sp. (strain ATCC 27184 / PCC 6803 / Kazusa)</name>
    <dbReference type="NCBI Taxonomy" id="1111708"/>
    <lineage>
        <taxon>Bacteria</taxon>
        <taxon>Bacillati</taxon>
        <taxon>Cyanobacteriota</taxon>
        <taxon>Cyanophyceae</taxon>
        <taxon>Synechococcales</taxon>
        <taxon>Merismopediaceae</taxon>
        <taxon>Synechocystis</taxon>
    </lineage>
</organism>
<dbReference type="EC" id="1.3.1.-"/>
<dbReference type="EMBL" id="BA000022">
    <property type="protein sequence ID" value="BAA10365.1"/>
    <property type="molecule type" value="Genomic_DNA"/>
</dbReference>
<dbReference type="PIR" id="S76519">
    <property type="entry name" value="S76519"/>
</dbReference>
<dbReference type="SMR" id="Q55724"/>
<dbReference type="FunCoup" id="Q55724">
    <property type="interactions" value="507"/>
</dbReference>
<dbReference type="STRING" id="1148.gene:10499866"/>
<dbReference type="PaxDb" id="1148-1001634"/>
<dbReference type="EnsemblBacteria" id="BAA10365">
    <property type="protein sequence ID" value="BAA10365"/>
    <property type="gene ID" value="BAA10365"/>
</dbReference>
<dbReference type="KEGG" id="syn:slr0644"/>
<dbReference type="eggNOG" id="COG0042">
    <property type="taxonomic scope" value="Bacteria"/>
</dbReference>
<dbReference type="InParanoid" id="Q55724"/>
<dbReference type="PhylomeDB" id="Q55724"/>
<dbReference type="Proteomes" id="UP000001425">
    <property type="component" value="Chromosome"/>
</dbReference>
<dbReference type="GO" id="GO:0050660">
    <property type="term" value="F:flavin adenine dinucleotide binding"/>
    <property type="evidence" value="ECO:0007669"/>
    <property type="project" value="InterPro"/>
</dbReference>
<dbReference type="GO" id="GO:0000049">
    <property type="term" value="F:tRNA binding"/>
    <property type="evidence" value="ECO:0007669"/>
    <property type="project" value="UniProtKB-KW"/>
</dbReference>
<dbReference type="GO" id="GO:0017150">
    <property type="term" value="F:tRNA dihydrouridine synthase activity"/>
    <property type="evidence" value="ECO:0007669"/>
    <property type="project" value="InterPro"/>
</dbReference>
<dbReference type="CDD" id="cd02801">
    <property type="entry name" value="DUS_like_FMN"/>
    <property type="match status" value="1"/>
</dbReference>
<dbReference type="Gene3D" id="3.20.20.70">
    <property type="entry name" value="Aldolase class I"/>
    <property type="match status" value="1"/>
</dbReference>
<dbReference type="Gene3D" id="1.10.1200.80">
    <property type="entry name" value="Putative flavin oxidoreducatase, domain 2"/>
    <property type="match status" value="1"/>
</dbReference>
<dbReference type="InterPro" id="IPR013785">
    <property type="entry name" value="Aldolase_TIM"/>
</dbReference>
<dbReference type="InterPro" id="IPR035587">
    <property type="entry name" value="DUS-like_FMN-bd"/>
</dbReference>
<dbReference type="InterPro" id="IPR001269">
    <property type="entry name" value="DUS_fam"/>
</dbReference>
<dbReference type="InterPro" id="IPR004652">
    <property type="entry name" value="DusB-like"/>
</dbReference>
<dbReference type="InterPro" id="IPR024036">
    <property type="entry name" value="tRNA-dHydroUridine_Synthase_C"/>
</dbReference>
<dbReference type="InterPro" id="IPR018517">
    <property type="entry name" value="tRNA_hU_synthase_CS"/>
</dbReference>
<dbReference type="NCBIfam" id="TIGR00737">
    <property type="entry name" value="nifR3_yhdG"/>
    <property type="match status" value="1"/>
</dbReference>
<dbReference type="PANTHER" id="PTHR45846">
    <property type="entry name" value="TRNA-DIHYDROURIDINE(47) SYNTHASE [NAD(P)(+)]-LIKE"/>
    <property type="match status" value="1"/>
</dbReference>
<dbReference type="PANTHER" id="PTHR45846:SF1">
    <property type="entry name" value="TRNA-DIHYDROURIDINE(47) SYNTHASE [NAD(P)(+)]-LIKE"/>
    <property type="match status" value="1"/>
</dbReference>
<dbReference type="Pfam" id="PF01207">
    <property type="entry name" value="Dus"/>
    <property type="match status" value="1"/>
</dbReference>
<dbReference type="PIRSF" id="PIRSF006621">
    <property type="entry name" value="Dus"/>
    <property type="match status" value="1"/>
</dbReference>
<dbReference type="SUPFAM" id="SSF51395">
    <property type="entry name" value="FMN-linked oxidoreductases"/>
    <property type="match status" value="1"/>
</dbReference>
<dbReference type="PROSITE" id="PS01136">
    <property type="entry name" value="UPF0034"/>
    <property type="match status" value="1"/>
</dbReference>
<protein>
    <recommendedName>
        <fullName>Probable tRNA-dihydrouridine synthase 1</fullName>
        <ecNumber>1.3.1.-</ecNumber>
    </recommendedName>
</protein>
<feature type="chain" id="PRO_0000162150" description="Probable tRNA-dihydrouridine synthase 1">
    <location>
        <begin position="1"/>
        <end position="355"/>
    </location>
</feature>
<feature type="active site" description="Proton donor" evidence="2">
    <location>
        <position position="132"/>
    </location>
</feature>
<feature type="binding site" evidence="1">
    <location>
        <begin position="48"/>
        <end position="50"/>
    </location>
    <ligand>
        <name>FMN</name>
        <dbReference type="ChEBI" id="CHEBI:58210"/>
    </ligand>
</feature>
<feature type="binding site" evidence="1">
    <location>
        <position position="102"/>
    </location>
    <ligand>
        <name>FMN</name>
        <dbReference type="ChEBI" id="CHEBI:58210"/>
    </ligand>
</feature>
<feature type="binding site" evidence="1">
    <location>
        <position position="171"/>
    </location>
    <ligand>
        <name>FMN</name>
        <dbReference type="ChEBI" id="CHEBI:58210"/>
    </ligand>
</feature>
<feature type="binding site" evidence="1">
    <location>
        <begin position="232"/>
        <end position="234"/>
    </location>
    <ligand>
        <name>FMN</name>
        <dbReference type="ChEBI" id="CHEBI:58210"/>
    </ligand>
</feature>
<feature type="binding site" evidence="1">
    <location>
        <begin position="256"/>
        <end position="257"/>
    </location>
    <ligand>
        <name>FMN</name>
        <dbReference type="ChEBI" id="CHEBI:58210"/>
    </ligand>
</feature>
<reference key="1">
    <citation type="journal article" date="1995" name="DNA Res.">
        <title>Sequence analysis of the genome of the unicellular cyanobacterium Synechocystis sp. strain PCC6803. I. Sequence features in the 1 Mb region from map positions 64% to 92% of the genome.</title>
        <authorList>
            <person name="Kaneko T."/>
            <person name="Tanaka A."/>
            <person name="Sato S."/>
            <person name="Kotani H."/>
            <person name="Sazuka T."/>
            <person name="Miyajima N."/>
            <person name="Sugiura M."/>
            <person name="Tabata S."/>
        </authorList>
    </citation>
    <scope>NUCLEOTIDE SEQUENCE [LARGE SCALE GENOMIC DNA]</scope>
    <source>
        <strain>ATCC 27184 / PCC 6803 / N-1</strain>
    </source>
</reference>
<reference key="2">
    <citation type="journal article" date="1996" name="DNA Res.">
        <title>Sequence analysis of the genome of the unicellular cyanobacterium Synechocystis sp. strain PCC6803. II. Sequence determination of the entire genome and assignment of potential protein-coding regions.</title>
        <authorList>
            <person name="Kaneko T."/>
            <person name="Sato S."/>
            <person name="Kotani H."/>
            <person name="Tanaka A."/>
            <person name="Asamizu E."/>
            <person name="Nakamura Y."/>
            <person name="Miyajima N."/>
            <person name="Hirosawa M."/>
            <person name="Sugiura M."/>
            <person name="Sasamoto S."/>
            <person name="Kimura T."/>
            <person name="Hosouchi T."/>
            <person name="Matsuno A."/>
            <person name="Muraki A."/>
            <person name="Nakazaki N."/>
            <person name="Naruo K."/>
            <person name="Okumura S."/>
            <person name="Shimpo S."/>
            <person name="Takeuchi C."/>
            <person name="Wada T."/>
            <person name="Watanabe A."/>
            <person name="Yamada M."/>
            <person name="Yasuda M."/>
            <person name="Tabata S."/>
        </authorList>
    </citation>
    <scope>NUCLEOTIDE SEQUENCE [LARGE SCALE GENOMIC DNA]</scope>
    <source>
        <strain>ATCC 27184 / PCC 6803 / Kazusa</strain>
    </source>
</reference>
<proteinExistence type="inferred from homology"/>
<gene>
    <name type="primary">dus1</name>
    <name type="ordered locus">slr0644</name>
</gene>
<evidence type="ECO:0000250" key="1">
    <source>
        <dbReference type="UniProtKB" id="P33371"/>
    </source>
</evidence>
<evidence type="ECO:0000250" key="2">
    <source>
        <dbReference type="UniProtKB" id="Q5SMC7"/>
    </source>
</evidence>
<evidence type="ECO:0000305" key="3"/>
<name>DUS1_SYNY3</name>
<keyword id="KW-0285">Flavoprotein</keyword>
<keyword id="KW-0288">FMN</keyword>
<keyword id="KW-0521">NADP</keyword>
<keyword id="KW-0560">Oxidoreductase</keyword>
<keyword id="KW-1185">Reference proteome</keyword>
<keyword id="KW-0694">RNA-binding</keyword>
<keyword id="KW-0819">tRNA processing</keyword>
<keyword id="KW-0820">tRNA-binding</keyword>